<reference key="1">
    <citation type="journal article" date="2002" name="Nature">
        <title>Complete genome sequence of the model actinomycete Streptomyces coelicolor A3(2).</title>
        <authorList>
            <person name="Bentley S.D."/>
            <person name="Chater K.F."/>
            <person name="Cerdeno-Tarraga A.-M."/>
            <person name="Challis G.L."/>
            <person name="Thomson N.R."/>
            <person name="James K.D."/>
            <person name="Harris D.E."/>
            <person name="Quail M.A."/>
            <person name="Kieser H."/>
            <person name="Harper D."/>
            <person name="Bateman A."/>
            <person name="Brown S."/>
            <person name="Chandra G."/>
            <person name="Chen C.W."/>
            <person name="Collins M."/>
            <person name="Cronin A."/>
            <person name="Fraser A."/>
            <person name="Goble A."/>
            <person name="Hidalgo J."/>
            <person name="Hornsby T."/>
            <person name="Howarth S."/>
            <person name="Huang C.-H."/>
            <person name="Kieser T."/>
            <person name="Larke L."/>
            <person name="Murphy L.D."/>
            <person name="Oliver K."/>
            <person name="O'Neil S."/>
            <person name="Rabbinowitsch E."/>
            <person name="Rajandream M.A."/>
            <person name="Rutherford K.M."/>
            <person name="Rutter S."/>
            <person name="Seeger K."/>
            <person name="Saunders D."/>
            <person name="Sharp S."/>
            <person name="Squares R."/>
            <person name="Squares S."/>
            <person name="Taylor K."/>
            <person name="Warren T."/>
            <person name="Wietzorrek A."/>
            <person name="Woodward J.R."/>
            <person name="Barrell B.G."/>
            <person name="Parkhill J."/>
            <person name="Hopwood D.A."/>
        </authorList>
    </citation>
    <scope>NUCLEOTIDE SEQUENCE [LARGE SCALE GENOMIC DNA]</scope>
    <source>
        <strain>ATCC BAA-471 / A3(2) / M145</strain>
    </source>
</reference>
<proteinExistence type="inferred from homology"/>
<dbReference type="EC" id="4.1.1.65" evidence="1"/>
<dbReference type="EMBL" id="AL939127">
    <property type="protein sequence ID" value="CAA22716.1"/>
    <property type="molecule type" value="Genomic_DNA"/>
</dbReference>
<dbReference type="PIR" id="T35955">
    <property type="entry name" value="T35955"/>
</dbReference>
<dbReference type="RefSeq" id="NP_630551.1">
    <property type="nucleotide sequence ID" value="NC_003888.3"/>
</dbReference>
<dbReference type="RefSeq" id="WP_003972510.1">
    <property type="nucleotide sequence ID" value="NZ_VNID01000002.1"/>
</dbReference>
<dbReference type="SMR" id="Q9ZBK6"/>
<dbReference type="STRING" id="100226.gene:17764125"/>
<dbReference type="PaxDb" id="100226-SCO6468"/>
<dbReference type="KEGG" id="sco:SCO6468"/>
<dbReference type="PATRIC" id="fig|100226.15.peg.6568"/>
<dbReference type="eggNOG" id="COG0688">
    <property type="taxonomic scope" value="Bacteria"/>
</dbReference>
<dbReference type="HOGENOM" id="CLU_072492_1_0_11"/>
<dbReference type="InParanoid" id="Q9ZBK6"/>
<dbReference type="OrthoDB" id="9790893at2"/>
<dbReference type="PhylomeDB" id="Q9ZBK6"/>
<dbReference type="UniPathway" id="UPA00558">
    <property type="reaction ID" value="UER00616"/>
</dbReference>
<dbReference type="Proteomes" id="UP000001973">
    <property type="component" value="Chromosome"/>
</dbReference>
<dbReference type="GO" id="GO:0005886">
    <property type="term" value="C:plasma membrane"/>
    <property type="evidence" value="ECO:0007669"/>
    <property type="project" value="UniProtKB-SubCell"/>
</dbReference>
<dbReference type="GO" id="GO:0004609">
    <property type="term" value="F:phosphatidylserine decarboxylase activity"/>
    <property type="evidence" value="ECO:0007669"/>
    <property type="project" value="UniProtKB-UniRule"/>
</dbReference>
<dbReference type="GO" id="GO:0006646">
    <property type="term" value="P:phosphatidylethanolamine biosynthetic process"/>
    <property type="evidence" value="ECO:0007669"/>
    <property type="project" value="UniProtKB-UniRule"/>
</dbReference>
<dbReference type="HAMAP" id="MF_00664">
    <property type="entry name" value="PS_decarb_PSD_A"/>
    <property type="match status" value="1"/>
</dbReference>
<dbReference type="InterPro" id="IPR003817">
    <property type="entry name" value="PS_Dcarbxylase"/>
</dbReference>
<dbReference type="InterPro" id="IPR033175">
    <property type="entry name" value="PSD-A"/>
</dbReference>
<dbReference type="NCBIfam" id="NF003683">
    <property type="entry name" value="PRK05305.2-3"/>
    <property type="match status" value="1"/>
</dbReference>
<dbReference type="NCBIfam" id="NF003685">
    <property type="entry name" value="PRK05305.2-5"/>
    <property type="match status" value="1"/>
</dbReference>
<dbReference type="PANTHER" id="PTHR35809">
    <property type="entry name" value="ARCHAETIDYLSERINE DECARBOXYLASE PROENZYME-RELATED"/>
    <property type="match status" value="1"/>
</dbReference>
<dbReference type="PANTHER" id="PTHR35809:SF1">
    <property type="entry name" value="ARCHAETIDYLSERINE DECARBOXYLASE PROENZYME-RELATED"/>
    <property type="match status" value="1"/>
</dbReference>
<dbReference type="Pfam" id="PF02666">
    <property type="entry name" value="PS_Dcarbxylase"/>
    <property type="match status" value="1"/>
</dbReference>
<organism>
    <name type="scientific">Streptomyces coelicolor (strain ATCC BAA-471 / A3(2) / M145)</name>
    <dbReference type="NCBI Taxonomy" id="100226"/>
    <lineage>
        <taxon>Bacteria</taxon>
        <taxon>Bacillati</taxon>
        <taxon>Actinomycetota</taxon>
        <taxon>Actinomycetes</taxon>
        <taxon>Kitasatosporales</taxon>
        <taxon>Streptomycetaceae</taxon>
        <taxon>Streptomyces</taxon>
        <taxon>Streptomyces albidoflavus group</taxon>
    </lineage>
</organism>
<feature type="chain" id="PRO_0000029811" description="Phosphatidylserine decarboxylase beta chain" evidence="1">
    <location>
        <begin position="1"/>
        <end position="187"/>
    </location>
</feature>
<feature type="chain" id="PRO_0000029812" description="Phosphatidylserine decarboxylase alpha chain" evidence="1">
    <location>
        <begin position="188"/>
        <end position="218"/>
    </location>
</feature>
<feature type="active site" description="Schiff-base intermediate with substrate; via pyruvic acid" evidence="1">
    <location>
        <position position="188"/>
    </location>
</feature>
<feature type="site" description="Cleavage (non-hydrolytic); by autocatalysis" evidence="1">
    <location>
        <begin position="187"/>
        <end position="188"/>
    </location>
</feature>
<feature type="modified residue" description="Pyruvic acid (Ser); by autocatalysis" evidence="1">
    <location>
        <position position="188"/>
    </location>
</feature>
<gene>
    <name evidence="1" type="primary">psd</name>
    <name type="ordered locus">SCO6468</name>
    <name type="ORF">SC9C7.04c</name>
</gene>
<protein>
    <recommendedName>
        <fullName evidence="1">Phosphatidylserine decarboxylase proenzyme</fullName>
        <ecNumber evidence="1">4.1.1.65</ecNumber>
    </recommendedName>
    <component>
        <recommendedName>
            <fullName evidence="1">Phosphatidylserine decarboxylase alpha chain</fullName>
        </recommendedName>
    </component>
    <component>
        <recommendedName>
            <fullName evidence="1">Phosphatidylserine decarboxylase beta chain</fullName>
        </recommendedName>
    </component>
</protein>
<sequence>MPHSQTSAPRDSLAGVRLARGASPWLLPTVATAAVSLLRARRSGTAKAVAVPATALAAGMLWFFRDPEREITQGRVVSPADGVVQSIMPWKDGRTRVAIFMSPLNVHVNRAPLAGTVTSVEHVPGGFVPAFNKESENNERVVWHFDTELGDIEMIQIAGAVARRIVPYVPQGTKVEQGERVGLIRFGSRVDLYLPEGVEVDVEVGQKTVAGVTRIDRD</sequence>
<comment type="function">
    <text evidence="1">Catalyzes the formation of phosphatidylethanolamine (PtdEtn) from phosphatidylserine (PtdSer).</text>
</comment>
<comment type="catalytic activity">
    <reaction evidence="1">
        <text>a 1,2-diacyl-sn-glycero-3-phospho-L-serine + H(+) = a 1,2-diacyl-sn-glycero-3-phosphoethanolamine + CO2</text>
        <dbReference type="Rhea" id="RHEA:20828"/>
        <dbReference type="ChEBI" id="CHEBI:15378"/>
        <dbReference type="ChEBI" id="CHEBI:16526"/>
        <dbReference type="ChEBI" id="CHEBI:57262"/>
        <dbReference type="ChEBI" id="CHEBI:64612"/>
        <dbReference type="EC" id="4.1.1.65"/>
    </reaction>
</comment>
<comment type="cofactor">
    <cofactor evidence="1">
        <name>pyruvate</name>
        <dbReference type="ChEBI" id="CHEBI:15361"/>
    </cofactor>
    <text evidence="1">Binds 1 pyruvoyl group covalently per subunit.</text>
</comment>
<comment type="pathway">
    <text evidence="1">Phospholipid metabolism; phosphatidylethanolamine biosynthesis; phosphatidylethanolamine from CDP-diacylglycerol: step 2/2.</text>
</comment>
<comment type="subunit">
    <text evidence="1">Heterodimer of a large membrane-associated beta subunit and a small pyruvoyl-containing alpha subunit.</text>
</comment>
<comment type="subcellular location">
    <subcellularLocation>
        <location evidence="1">Cell membrane</location>
        <topology evidence="1">Peripheral membrane protein</topology>
    </subcellularLocation>
</comment>
<comment type="PTM">
    <text evidence="1">Is synthesized initially as an inactive proenzyme. Formation of the active enzyme involves a self-maturation process in which the active site pyruvoyl group is generated from an internal serine residue via an autocatalytic post-translational modification. Two non-identical subunits are generated from the proenzyme in this reaction, and the pyruvate is formed at the N-terminus of the alpha chain, which is derived from the carboxyl end of the proenzyme. The post-translation cleavage follows an unusual pathway, termed non-hydrolytic serinolysis, in which the side chain hydroxyl group of the serine supplies its oxygen atom to form the C-terminus of the beta chain, while the remainder of the serine residue undergoes an oxidative deamination to produce ammonia and the pyruvoyl prosthetic group on the alpha chain.</text>
</comment>
<comment type="similarity">
    <text evidence="1">Belongs to the phosphatidylserine decarboxylase family. PSD-A subfamily.</text>
</comment>
<keyword id="KW-1003">Cell membrane</keyword>
<keyword id="KW-0210">Decarboxylase</keyword>
<keyword id="KW-0444">Lipid biosynthesis</keyword>
<keyword id="KW-0443">Lipid metabolism</keyword>
<keyword id="KW-0456">Lyase</keyword>
<keyword id="KW-0472">Membrane</keyword>
<keyword id="KW-0594">Phospholipid biosynthesis</keyword>
<keyword id="KW-1208">Phospholipid metabolism</keyword>
<keyword id="KW-0670">Pyruvate</keyword>
<keyword id="KW-1185">Reference proteome</keyword>
<keyword id="KW-0865">Zymogen</keyword>
<name>PSD_STRCO</name>
<evidence type="ECO:0000255" key="1">
    <source>
        <dbReference type="HAMAP-Rule" id="MF_00664"/>
    </source>
</evidence>
<accession>Q9ZBK6</accession>